<name>PURA_NEOSM</name>
<accession>Q2GEH7</accession>
<protein>
    <recommendedName>
        <fullName evidence="1">Adenylosuccinate synthetase</fullName>
        <shortName evidence="1">AMPSase</shortName>
        <shortName evidence="1">AdSS</shortName>
        <ecNumber evidence="1">6.3.4.4</ecNumber>
    </recommendedName>
    <alternativeName>
        <fullName evidence="1">IMP--aspartate ligase</fullName>
    </alternativeName>
</protein>
<evidence type="ECO:0000255" key="1">
    <source>
        <dbReference type="HAMAP-Rule" id="MF_00011"/>
    </source>
</evidence>
<organism>
    <name type="scientific">Neorickettsia sennetsu (strain ATCC VR-367 / Miyayama)</name>
    <name type="common">Ehrlichia sennetsu</name>
    <dbReference type="NCBI Taxonomy" id="222891"/>
    <lineage>
        <taxon>Bacteria</taxon>
        <taxon>Pseudomonadati</taxon>
        <taxon>Pseudomonadota</taxon>
        <taxon>Alphaproteobacteria</taxon>
        <taxon>Rickettsiales</taxon>
        <taxon>Anaplasmataceae</taxon>
        <taxon>Neorickettsia</taxon>
    </lineage>
</organism>
<reference key="1">
    <citation type="journal article" date="2006" name="PLoS Genet.">
        <title>Comparative genomics of emerging human ehrlichiosis agents.</title>
        <authorList>
            <person name="Dunning Hotopp J.C."/>
            <person name="Lin M."/>
            <person name="Madupu R."/>
            <person name="Crabtree J."/>
            <person name="Angiuoli S.V."/>
            <person name="Eisen J.A."/>
            <person name="Seshadri R."/>
            <person name="Ren Q."/>
            <person name="Wu M."/>
            <person name="Utterback T.R."/>
            <person name="Smith S."/>
            <person name="Lewis M."/>
            <person name="Khouri H."/>
            <person name="Zhang C."/>
            <person name="Niu H."/>
            <person name="Lin Q."/>
            <person name="Ohashi N."/>
            <person name="Zhi N."/>
            <person name="Nelson W.C."/>
            <person name="Brinkac L.M."/>
            <person name="Dodson R.J."/>
            <person name="Rosovitz M.J."/>
            <person name="Sundaram J.P."/>
            <person name="Daugherty S.C."/>
            <person name="Davidsen T."/>
            <person name="Durkin A.S."/>
            <person name="Gwinn M.L."/>
            <person name="Haft D.H."/>
            <person name="Selengut J.D."/>
            <person name="Sullivan S.A."/>
            <person name="Zafar N."/>
            <person name="Zhou L."/>
            <person name="Benahmed F."/>
            <person name="Forberger H."/>
            <person name="Halpin R."/>
            <person name="Mulligan S."/>
            <person name="Robinson J."/>
            <person name="White O."/>
            <person name="Rikihisa Y."/>
            <person name="Tettelin H."/>
        </authorList>
    </citation>
    <scope>NUCLEOTIDE SEQUENCE [LARGE SCALE GENOMIC DNA]</scope>
    <source>
        <strain>ATCC VR-367 / Miyayama</strain>
    </source>
</reference>
<sequence>MDAAVIGLQWGDEGKGKIVDHLAGDFDSVVRFNGGNNAGHTVIVGERTYKLRVLPSGILREDVVSVIGNGVVLDPQGLLDEIHLLKKEGVQIHPGKLLIADNCHLVLPIHRELDVLFEQKQKLGTTKCGIGPCYQDKVARRGIRLCDLRSEEQLRKTLAGLSYYHNIVRKGAGLQEVCQEILFASLFAMRDELLCYAVPPCELQGILSGKSKLYEGAQGMLLDIDHGTYPFVTSGSSGLGQVMNGAALGCVNRVIGVMKGYVTRVGEGILPTEQDNAFGSELQKLGKEVGTVSGRIRRCGWCDLPLVRYVNAVAGVTEIVITKLDVLDSFNEIFLCCAYKGKKGKLIEICSPSKLCYSKYEAQYIVMKGWRSSTVGVTSFCDLPDGAKSFVETIEKCLDLPVTMISNGPERTQVLHR</sequence>
<gene>
    <name evidence="1" type="primary">purA</name>
    <name type="ordered locus">NSE_0225</name>
</gene>
<feature type="chain" id="PRO_1000000877" description="Adenylosuccinate synthetase">
    <location>
        <begin position="1"/>
        <end position="417"/>
    </location>
</feature>
<feature type="active site" description="Proton acceptor" evidence="1">
    <location>
        <position position="12"/>
    </location>
</feature>
<feature type="active site" description="Proton donor" evidence="1">
    <location>
        <position position="40"/>
    </location>
</feature>
<feature type="binding site" evidence="1">
    <location>
        <begin position="11"/>
        <end position="17"/>
    </location>
    <ligand>
        <name>GTP</name>
        <dbReference type="ChEBI" id="CHEBI:37565"/>
    </ligand>
</feature>
<feature type="binding site" description="in other chain" evidence="1">
    <location>
        <begin position="12"/>
        <end position="15"/>
    </location>
    <ligand>
        <name>IMP</name>
        <dbReference type="ChEBI" id="CHEBI:58053"/>
        <note>ligand shared between dimeric partners</note>
    </ligand>
</feature>
<feature type="binding site" evidence="1">
    <location>
        <position position="12"/>
    </location>
    <ligand>
        <name>Mg(2+)</name>
        <dbReference type="ChEBI" id="CHEBI:18420"/>
    </ligand>
</feature>
<feature type="binding site" description="in other chain" evidence="1">
    <location>
        <begin position="37"/>
        <end position="40"/>
    </location>
    <ligand>
        <name>IMP</name>
        <dbReference type="ChEBI" id="CHEBI:58053"/>
        <note>ligand shared between dimeric partners</note>
    </ligand>
</feature>
<feature type="binding site" evidence="1">
    <location>
        <begin position="39"/>
        <end position="41"/>
    </location>
    <ligand>
        <name>GTP</name>
        <dbReference type="ChEBI" id="CHEBI:37565"/>
    </ligand>
</feature>
<feature type="binding site" evidence="1">
    <location>
        <position position="39"/>
    </location>
    <ligand>
        <name>Mg(2+)</name>
        <dbReference type="ChEBI" id="CHEBI:18420"/>
    </ligand>
</feature>
<feature type="binding site" description="in other chain" evidence="1">
    <location>
        <position position="126"/>
    </location>
    <ligand>
        <name>IMP</name>
        <dbReference type="ChEBI" id="CHEBI:58053"/>
        <note>ligand shared between dimeric partners</note>
    </ligand>
</feature>
<feature type="binding site" evidence="1">
    <location>
        <position position="140"/>
    </location>
    <ligand>
        <name>IMP</name>
        <dbReference type="ChEBI" id="CHEBI:58053"/>
        <note>ligand shared between dimeric partners</note>
    </ligand>
</feature>
<feature type="binding site" description="in other chain" evidence="1">
    <location>
        <position position="218"/>
    </location>
    <ligand>
        <name>IMP</name>
        <dbReference type="ChEBI" id="CHEBI:58053"/>
        <note>ligand shared between dimeric partners</note>
    </ligand>
</feature>
<feature type="binding site" description="in other chain" evidence="1">
    <location>
        <position position="233"/>
    </location>
    <ligand>
        <name>IMP</name>
        <dbReference type="ChEBI" id="CHEBI:58053"/>
        <note>ligand shared between dimeric partners</note>
    </ligand>
</feature>
<feature type="binding site" evidence="1">
    <location>
        <begin position="291"/>
        <end position="297"/>
    </location>
    <ligand>
        <name>substrate</name>
    </ligand>
</feature>
<feature type="binding site" description="in other chain" evidence="1">
    <location>
        <position position="295"/>
    </location>
    <ligand>
        <name>IMP</name>
        <dbReference type="ChEBI" id="CHEBI:58053"/>
        <note>ligand shared between dimeric partners</note>
    </ligand>
</feature>
<feature type="binding site" evidence="1">
    <location>
        <position position="297"/>
    </location>
    <ligand>
        <name>GTP</name>
        <dbReference type="ChEBI" id="CHEBI:37565"/>
    </ligand>
</feature>
<feature type="binding site" evidence="1">
    <location>
        <begin position="323"/>
        <end position="325"/>
    </location>
    <ligand>
        <name>GTP</name>
        <dbReference type="ChEBI" id="CHEBI:37565"/>
    </ligand>
</feature>
<feature type="binding site" evidence="1">
    <location>
        <begin position="406"/>
        <end position="408"/>
    </location>
    <ligand>
        <name>GTP</name>
        <dbReference type="ChEBI" id="CHEBI:37565"/>
    </ligand>
</feature>
<keyword id="KW-0963">Cytoplasm</keyword>
<keyword id="KW-0342">GTP-binding</keyword>
<keyword id="KW-0436">Ligase</keyword>
<keyword id="KW-0460">Magnesium</keyword>
<keyword id="KW-0479">Metal-binding</keyword>
<keyword id="KW-0547">Nucleotide-binding</keyword>
<keyword id="KW-0658">Purine biosynthesis</keyword>
<comment type="function">
    <text evidence="1">Plays an important role in the de novo pathway of purine nucleotide biosynthesis. Catalyzes the first committed step in the biosynthesis of AMP from IMP.</text>
</comment>
<comment type="catalytic activity">
    <reaction evidence="1">
        <text>IMP + L-aspartate + GTP = N(6)-(1,2-dicarboxyethyl)-AMP + GDP + phosphate + 2 H(+)</text>
        <dbReference type="Rhea" id="RHEA:15753"/>
        <dbReference type="ChEBI" id="CHEBI:15378"/>
        <dbReference type="ChEBI" id="CHEBI:29991"/>
        <dbReference type="ChEBI" id="CHEBI:37565"/>
        <dbReference type="ChEBI" id="CHEBI:43474"/>
        <dbReference type="ChEBI" id="CHEBI:57567"/>
        <dbReference type="ChEBI" id="CHEBI:58053"/>
        <dbReference type="ChEBI" id="CHEBI:58189"/>
        <dbReference type="EC" id="6.3.4.4"/>
    </reaction>
</comment>
<comment type="cofactor">
    <cofactor evidence="1">
        <name>Mg(2+)</name>
        <dbReference type="ChEBI" id="CHEBI:18420"/>
    </cofactor>
    <text evidence="1">Binds 1 Mg(2+) ion per subunit.</text>
</comment>
<comment type="pathway">
    <text evidence="1">Purine metabolism; AMP biosynthesis via de novo pathway; AMP from IMP: step 1/2.</text>
</comment>
<comment type="subunit">
    <text evidence="1">Homodimer.</text>
</comment>
<comment type="subcellular location">
    <subcellularLocation>
        <location evidence="1">Cytoplasm</location>
    </subcellularLocation>
</comment>
<comment type="similarity">
    <text evidence="1">Belongs to the adenylosuccinate synthetase family.</text>
</comment>
<proteinExistence type="inferred from homology"/>
<dbReference type="EC" id="6.3.4.4" evidence="1"/>
<dbReference type="EMBL" id="CP000237">
    <property type="protein sequence ID" value="ABD46004.1"/>
    <property type="molecule type" value="Genomic_DNA"/>
</dbReference>
<dbReference type="RefSeq" id="WP_011451625.1">
    <property type="nucleotide sequence ID" value="NC_007798.1"/>
</dbReference>
<dbReference type="SMR" id="Q2GEH7"/>
<dbReference type="STRING" id="222891.NSE_0225"/>
<dbReference type="KEGG" id="nse:NSE_0225"/>
<dbReference type="eggNOG" id="COG0104">
    <property type="taxonomic scope" value="Bacteria"/>
</dbReference>
<dbReference type="HOGENOM" id="CLU_029848_0_2_5"/>
<dbReference type="OrthoDB" id="9807553at2"/>
<dbReference type="UniPathway" id="UPA00075">
    <property type="reaction ID" value="UER00335"/>
</dbReference>
<dbReference type="Proteomes" id="UP000001942">
    <property type="component" value="Chromosome"/>
</dbReference>
<dbReference type="GO" id="GO:0005737">
    <property type="term" value="C:cytoplasm"/>
    <property type="evidence" value="ECO:0007669"/>
    <property type="project" value="UniProtKB-SubCell"/>
</dbReference>
<dbReference type="GO" id="GO:0004019">
    <property type="term" value="F:adenylosuccinate synthase activity"/>
    <property type="evidence" value="ECO:0007669"/>
    <property type="project" value="UniProtKB-UniRule"/>
</dbReference>
<dbReference type="GO" id="GO:0005525">
    <property type="term" value="F:GTP binding"/>
    <property type="evidence" value="ECO:0007669"/>
    <property type="project" value="UniProtKB-UniRule"/>
</dbReference>
<dbReference type="GO" id="GO:0000287">
    <property type="term" value="F:magnesium ion binding"/>
    <property type="evidence" value="ECO:0007669"/>
    <property type="project" value="UniProtKB-UniRule"/>
</dbReference>
<dbReference type="GO" id="GO:0044208">
    <property type="term" value="P:'de novo' AMP biosynthetic process"/>
    <property type="evidence" value="ECO:0007669"/>
    <property type="project" value="UniProtKB-UniRule"/>
</dbReference>
<dbReference type="GO" id="GO:0046040">
    <property type="term" value="P:IMP metabolic process"/>
    <property type="evidence" value="ECO:0007669"/>
    <property type="project" value="TreeGrafter"/>
</dbReference>
<dbReference type="CDD" id="cd03108">
    <property type="entry name" value="AdSS"/>
    <property type="match status" value="1"/>
</dbReference>
<dbReference type="FunFam" id="3.90.170.10:FF:000001">
    <property type="entry name" value="Adenylosuccinate synthetase"/>
    <property type="match status" value="1"/>
</dbReference>
<dbReference type="Gene3D" id="3.40.440.10">
    <property type="entry name" value="Adenylosuccinate Synthetase, subunit A, domain 1"/>
    <property type="match status" value="1"/>
</dbReference>
<dbReference type="Gene3D" id="1.10.300.10">
    <property type="entry name" value="Adenylosuccinate Synthetase, subunit A, domain 2"/>
    <property type="match status" value="1"/>
</dbReference>
<dbReference type="Gene3D" id="3.90.170.10">
    <property type="entry name" value="Adenylosuccinate Synthetase, subunit A, domain 3"/>
    <property type="match status" value="1"/>
</dbReference>
<dbReference type="HAMAP" id="MF_00011">
    <property type="entry name" value="Adenylosucc_synth"/>
    <property type="match status" value="1"/>
</dbReference>
<dbReference type="InterPro" id="IPR018220">
    <property type="entry name" value="Adenylosuccin_syn_GTP-bd"/>
</dbReference>
<dbReference type="InterPro" id="IPR033128">
    <property type="entry name" value="Adenylosuccin_syn_Lys_AS"/>
</dbReference>
<dbReference type="InterPro" id="IPR042109">
    <property type="entry name" value="Adenylosuccinate_synth_dom1"/>
</dbReference>
<dbReference type="InterPro" id="IPR042110">
    <property type="entry name" value="Adenylosuccinate_synth_dom2"/>
</dbReference>
<dbReference type="InterPro" id="IPR042111">
    <property type="entry name" value="Adenylosuccinate_synth_dom3"/>
</dbReference>
<dbReference type="InterPro" id="IPR001114">
    <property type="entry name" value="Adenylosuccinate_synthetase"/>
</dbReference>
<dbReference type="InterPro" id="IPR027417">
    <property type="entry name" value="P-loop_NTPase"/>
</dbReference>
<dbReference type="NCBIfam" id="NF002223">
    <property type="entry name" value="PRK01117.1"/>
    <property type="match status" value="1"/>
</dbReference>
<dbReference type="NCBIfam" id="TIGR00184">
    <property type="entry name" value="purA"/>
    <property type="match status" value="1"/>
</dbReference>
<dbReference type="PANTHER" id="PTHR11846">
    <property type="entry name" value="ADENYLOSUCCINATE SYNTHETASE"/>
    <property type="match status" value="1"/>
</dbReference>
<dbReference type="PANTHER" id="PTHR11846:SF0">
    <property type="entry name" value="ADENYLOSUCCINATE SYNTHETASE"/>
    <property type="match status" value="1"/>
</dbReference>
<dbReference type="Pfam" id="PF00709">
    <property type="entry name" value="Adenylsucc_synt"/>
    <property type="match status" value="1"/>
</dbReference>
<dbReference type="SMART" id="SM00788">
    <property type="entry name" value="Adenylsucc_synt"/>
    <property type="match status" value="1"/>
</dbReference>
<dbReference type="SUPFAM" id="SSF52540">
    <property type="entry name" value="P-loop containing nucleoside triphosphate hydrolases"/>
    <property type="match status" value="1"/>
</dbReference>
<dbReference type="PROSITE" id="PS01266">
    <property type="entry name" value="ADENYLOSUCCIN_SYN_1"/>
    <property type="match status" value="1"/>
</dbReference>
<dbReference type="PROSITE" id="PS00513">
    <property type="entry name" value="ADENYLOSUCCIN_SYN_2"/>
    <property type="match status" value="1"/>
</dbReference>